<feature type="initiator methionine" description="Removed" evidence="2">
    <location>
        <position position="1"/>
    </location>
</feature>
<feature type="chain" id="PRO_0000328966" description="Coiled-coil domain-containing protein 69-B">
    <location>
        <begin position="2"/>
        <end position="301"/>
    </location>
</feature>
<feature type="region of interest" description="Disordered" evidence="3">
    <location>
        <begin position="1"/>
        <end position="43"/>
    </location>
</feature>
<feature type="coiled-coil region" evidence="2">
    <location>
        <begin position="42"/>
        <end position="167"/>
    </location>
</feature>
<feature type="coiled-coil region" evidence="2">
    <location>
        <begin position="213"/>
        <end position="281"/>
    </location>
</feature>
<feature type="compositionally biased region" description="Polar residues" evidence="3">
    <location>
        <begin position="26"/>
        <end position="41"/>
    </location>
</feature>
<feature type="lipid moiety-binding region" description="N-myristoyl glycine" evidence="2">
    <location>
        <position position="2"/>
    </location>
</feature>
<comment type="function">
    <text evidence="1">May act as a scaffold to regulate the recruitment and assembly of spindle midzone components.</text>
</comment>
<comment type="subcellular location">
    <subcellularLocation>
        <location evidence="1">Cytoplasm</location>
        <location evidence="1">Cytoskeleton</location>
        <location evidence="1">Spindle</location>
    </subcellularLocation>
    <subcellularLocation>
        <location evidence="1">Midbody</location>
    </subcellularLocation>
    <text evidence="1">During early anaphase, localizes along overlapping interpolar microtubules between the separating chromosomes. During late anaphase, localizes to the center of spindle midzone. Concentrated at the midbody during telophase.</text>
</comment>
<comment type="similarity">
    <text evidence="4">Belongs to the CCDC69 family.</text>
</comment>
<comment type="sequence caution" evidence="4">
    <conflict type="frameshift">
        <sequence resource="EMBL-CDS" id="AAI24991"/>
    </conflict>
</comment>
<accession>Q08AV7</accession>
<name>CC69B_XENLA</name>
<gene>
    <name type="primary">ccdc69-b</name>
</gene>
<sequence length="301" mass="35136">MGSKTSKMCCPQLRKKKRQKAHKEGPSSQELNDLNAKSQGPNELLQKIKEYEQEIRNILQKHQEEKTALADAHKADVEARTLVLQAQAQKDRDAETVKLLSEQAATMKAEMEEMFAELQKSYEQEKSSLTEIHQQLTDALQESVDELNSQLASFREKMKRVEESILSQDYQRHIQDYGSPGQFWEKELQSLHFVIEMKSELIREQDKRLQRHKSTMERSLELEERSRTLQQENEALKVQTQKQGAITVRLSEELLSIQTTLEKQTHRCEQLEREKEQNLYRAVIGDITQQFSLQELPVMVL</sequence>
<protein>
    <recommendedName>
        <fullName>Coiled-coil domain-containing protein 69-B</fullName>
    </recommendedName>
</protein>
<proteinExistence type="evidence at transcript level"/>
<reference key="1">
    <citation type="submission" date="2006-10" db="EMBL/GenBank/DDBJ databases">
        <authorList>
            <consortium name="NIH - Xenopus Gene Collection (XGC) project"/>
        </authorList>
    </citation>
    <scope>NUCLEOTIDE SEQUENCE [LARGE SCALE MRNA]</scope>
    <source>
        <tissue>Ovary</tissue>
    </source>
</reference>
<dbReference type="EMBL" id="BC124990">
    <property type="protein sequence ID" value="AAI24991.1"/>
    <property type="status" value="ALT_FRAME"/>
    <property type="molecule type" value="mRNA"/>
</dbReference>
<dbReference type="RefSeq" id="NP_001121321.1">
    <property type="nucleotide sequence ID" value="NM_001127849.1"/>
</dbReference>
<dbReference type="SMR" id="Q08AV7"/>
<dbReference type="DNASU" id="100158406"/>
<dbReference type="GeneID" id="100158406"/>
<dbReference type="KEGG" id="xla:100158406"/>
<dbReference type="AGR" id="Xenbase:XB-GENE-6252750"/>
<dbReference type="CTD" id="100158406"/>
<dbReference type="OrthoDB" id="10038993at2759"/>
<dbReference type="Proteomes" id="UP000186698">
    <property type="component" value="Chromosome 3L"/>
</dbReference>
<dbReference type="Bgee" id="100158406">
    <property type="expression patterns" value="Expressed in egg cell and 18 other cell types or tissues"/>
</dbReference>
<dbReference type="GO" id="GO:0005737">
    <property type="term" value="C:cytoplasm"/>
    <property type="evidence" value="ECO:0007669"/>
    <property type="project" value="UniProtKB-KW"/>
</dbReference>
<dbReference type="GO" id="GO:0030496">
    <property type="term" value="C:midbody"/>
    <property type="evidence" value="ECO:0007669"/>
    <property type="project" value="UniProtKB-SubCell"/>
</dbReference>
<dbReference type="GO" id="GO:0005634">
    <property type="term" value="C:nucleus"/>
    <property type="evidence" value="ECO:0000318"/>
    <property type="project" value="GO_Central"/>
</dbReference>
<dbReference type="GO" id="GO:0051233">
    <property type="term" value="C:spindle midzone"/>
    <property type="evidence" value="ECO:0000250"/>
    <property type="project" value="UniProtKB"/>
</dbReference>
<dbReference type="GO" id="GO:0008017">
    <property type="term" value="F:microtubule binding"/>
    <property type="evidence" value="ECO:0000318"/>
    <property type="project" value="GO_Central"/>
</dbReference>
<dbReference type="GO" id="GO:0051255">
    <property type="term" value="P:spindle midzone assembly"/>
    <property type="evidence" value="ECO:0000250"/>
    <property type="project" value="UniProtKB"/>
</dbReference>
<dbReference type="InterPro" id="IPR051293">
    <property type="entry name" value="MTUS1/CCDC69"/>
</dbReference>
<dbReference type="PANTHER" id="PTHR24200:SF6">
    <property type="entry name" value="COILED-COIL DOMAIN-CONTAINING PROTEIN 69"/>
    <property type="match status" value="1"/>
</dbReference>
<dbReference type="PANTHER" id="PTHR24200">
    <property type="entry name" value="TOUCAN, ISOFORM A"/>
    <property type="match status" value="1"/>
</dbReference>
<evidence type="ECO:0000250" key="1">
    <source>
        <dbReference type="UniProtKB" id="A6NI79"/>
    </source>
</evidence>
<evidence type="ECO:0000255" key="2"/>
<evidence type="ECO:0000256" key="3">
    <source>
        <dbReference type="SAM" id="MobiDB-lite"/>
    </source>
</evidence>
<evidence type="ECO:0000305" key="4"/>
<keyword id="KW-0175">Coiled coil</keyword>
<keyword id="KW-0963">Cytoplasm</keyword>
<keyword id="KW-0206">Cytoskeleton</keyword>
<keyword id="KW-0449">Lipoprotein</keyword>
<keyword id="KW-0519">Myristate</keyword>
<keyword id="KW-1185">Reference proteome</keyword>
<organism>
    <name type="scientific">Xenopus laevis</name>
    <name type="common">African clawed frog</name>
    <dbReference type="NCBI Taxonomy" id="8355"/>
    <lineage>
        <taxon>Eukaryota</taxon>
        <taxon>Metazoa</taxon>
        <taxon>Chordata</taxon>
        <taxon>Craniata</taxon>
        <taxon>Vertebrata</taxon>
        <taxon>Euteleostomi</taxon>
        <taxon>Amphibia</taxon>
        <taxon>Batrachia</taxon>
        <taxon>Anura</taxon>
        <taxon>Pipoidea</taxon>
        <taxon>Pipidae</taxon>
        <taxon>Xenopodinae</taxon>
        <taxon>Xenopus</taxon>
        <taxon>Xenopus</taxon>
    </lineage>
</organism>